<reference key="1">
    <citation type="submission" date="2003-05" db="EMBL/GenBank/DDBJ databases">
        <title>Cloning of human full-length CDSs in BD Creator(TM) system donor vector.</title>
        <authorList>
            <person name="Kalnine N."/>
            <person name="Chen X."/>
            <person name="Rolfs A."/>
            <person name="Halleck A."/>
            <person name="Hines L."/>
            <person name="Eisenstein S."/>
            <person name="Koundinya M."/>
            <person name="Raphael J."/>
            <person name="Moreira D."/>
            <person name="Kelley T."/>
            <person name="LaBaer J."/>
            <person name="Lin Y."/>
            <person name="Phelan M."/>
            <person name="Farmer A."/>
        </authorList>
    </citation>
    <scope>NUCLEOTIDE SEQUENCE [LARGE SCALE MRNA] (ISOFORM 2)</scope>
</reference>
<reference key="2">
    <citation type="journal article" date="2004" name="Nat. Genet.">
        <title>Complete sequencing and characterization of 21,243 full-length human cDNAs.</title>
        <authorList>
            <person name="Ota T."/>
            <person name="Suzuki Y."/>
            <person name="Nishikawa T."/>
            <person name="Otsuki T."/>
            <person name="Sugiyama T."/>
            <person name="Irie R."/>
            <person name="Wakamatsu A."/>
            <person name="Hayashi K."/>
            <person name="Sato H."/>
            <person name="Nagai K."/>
            <person name="Kimura K."/>
            <person name="Makita H."/>
            <person name="Sekine M."/>
            <person name="Obayashi M."/>
            <person name="Nishi T."/>
            <person name="Shibahara T."/>
            <person name="Tanaka T."/>
            <person name="Ishii S."/>
            <person name="Yamamoto J."/>
            <person name="Saito K."/>
            <person name="Kawai Y."/>
            <person name="Isono Y."/>
            <person name="Nakamura Y."/>
            <person name="Nagahari K."/>
            <person name="Murakami K."/>
            <person name="Yasuda T."/>
            <person name="Iwayanagi T."/>
            <person name="Wagatsuma M."/>
            <person name="Shiratori A."/>
            <person name="Sudo H."/>
            <person name="Hosoiri T."/>
            <person name="Kaku Y."/>
            <person name="Kodaira H."/>
            <person name="Kondo H."/>
            <person name="Sugawara M."/>
            <person name="Takahashi M."/>
            <person name="Kanda K."/>
            <person name="Yokoi T."/>
            <person name="Furuya T."/>
            <person name="Kikkawa E."/>
            <person name="Omura Y."/>
            <person name="Abe K."/>
            <person name="Kamihara K."/>
            <person name="Katsuta N."/>
            <person name="Sato K."/>
            <person name="Tanikawa M."/>
            <person name="Yamazaki M."/>
            <person name="Ninomiya K."/>
            <person name="Ishibashi T."/>
            <person name="Yamashita H."/>
            <person name="Murakawa K."/>
            <person name="Fujimori K."/>
            <person name="Tanai H."/>
            <person name="Kimata M."/>
            <person name="Watanabe M."/>
            <person name="Hiraoka S."/>
            <person name="Chiba Y."/>
            <person name="Ishida S."/>
            <person name="Ono Y."/>
            <person name="Takiguchi S."/>
            <person name="Watanabe S."/>
            <person name="Yosida M."/>
            <person name="Hotuta T."/>
            <person name="Kusano J."/>
            <person name="Kanehori K."/>
            <person name="Takahashi-Fujii A."/>
            <person name="Hara H."/>
            <person name="Tanase T.-O."/>
            <person name="Nomura Y."/>
            <person name="Togiya S."/>
            <person name="Komai F."/>
            <person name="Hara R."/>
            <person name="Takeuchi K."/>
            <person name="Arita M."/>
            <person name="Imose N."/>
            <person name="Musashino K."/>
            <person name="Yuuki H."/>
            <person name="Oshima A."/>
            <person name="Sasaki N."/>
            <person name="Aotsuka S."/>
            <person name="Yoshikawa Y."/>
            <person name="Matsunawa H."/>
            <person name="Ichihara T."/>
            <person name="Shiohata N."/>
            <person name="Sano S."/>
            <person name="Moriya S."/>
            <person name="Momiyama H."/>
            <person name="Satoh N."/>
            <person name="Takami S."/>
            <person name="Terashima Y."/>
            <person name="Suzuki O."/>
            <person name="Nakagawa S."/>
            <person name="Senoh A."/>
            <person name="Mizoguchi H."/>
            <person name="Goto Y."/>
            <person name="Shimizu F."/>
            <person name="Wakebe H."/>
            <person name="Hishigaki H."/>
            <person name="Watanabe T."/>
            <person name="Sugiyama A."/>
            <person name="Takemoto M."/>
            <person name="Kawakami B."/>
            <person name="Yamazaki M."/>
            <person name="Watanabe K."/>
            <person name="Kumagai A."/>
            <person name="Itakura S."/>
            <person name="Fukuzumi Y."/>
            <person name="Fujimori Y."/>
            <person name="Komiyama M."/>
            <person name="Tashiro H."/>
            <person name="Tanigami A."/>
            <person name="Fujiwara T."/>
            <person name="Ono T."/>
            <person name="Yamada K."/>
            <person name="Fujii Y."/>
            <person name="Ozaki K."/>
            <person name="Hirao M."/>
            <person name="Ohmori Y."/>
            <person name="Kawabata A."/>
            <person name="Hikiji T."/>
            <person name="Kobatake N."/>
            <person name="Inagaki H."/>
            <person name="Ikema Y."/>
            <person name="Okamoto S."/>
            <person name="Okitani R."/>
            <person name="Kawakami T."/>
            <person name="Noguchi S."/>
            <person name="Itoh T."/>
            <person name="Shigeta K."/>
            <person name="Senba T."/>
            <person name="Matsumura K."/>
            <person name="Nakajima Y."/>
            <person name="Mizuno T."/>
            <person name="Morinaga M."/>
            <person name="Sasaki M."/>
            <person name="Togashi T."/>
            <person name="Oyama M."/>
            <person name="Hata H."/>
            <person name="Watanabe M."/>
            <person name="Komatsu T."/>
            <person name="Mizushima-Sugano J."/>
            <person name="Satoh T."/>
            <person name="Shirai Y."/>
            <person name="Takahashi Y."/>
            <person name="Nakagawa K."/>
            <person name="Okumura K."/>
            <person name="Nagase T."/>
            <person name="Nomura N."/>
            <person name="Kikuchi H."/>
            <person name="Masuho Y."/>
            <person name="Yamashita R."/>
            <person name="Nakai K."/>
            <person name="Yada T."/>
            <person name="Nakamura Y."/>
            <person name="Ohara O."/>
            <person name="Isogai T."/>
            <person name="Sugano S."/>
        </authorList>
    </citation>
    <scope>NUCLEOTIDE SEQUENCE [LARGE SCALE MRNA] (ISOFORM 1)</scope>
    <scope>PARTIAL NUCLEOTIDE SEQUENCE [LARGE SCALE MRNA] (ISOFORM 3)</scope>
    <source>
        <tissue>Gastric mucosa</tissue>
        <tissue>Uterus</tissue>
    </source>
</reference>
<reference key="3">
    <citation type="journal article" date="2006" name="Nature">
        <title>The DNA sequence and biological annotation of human chromosome 1.</title>
        <authorList>
            <person name="Gregory S.G."/>
            <person name="Barlow K.F."/>
            <person name="McLay K.E."/>
            <person name="Kaul R."/>
            <person name="Swarbreck D."/>
            <person name="Dunham A."/>
            <person name="Scott C.E."/>
            <person name="Howe K.L."/>
            <person name="Woodfine K."/>
            <person name="Spencer C.C.A."/>
            <person name="Jones M.C."/>
            <person name="Gillson C."/>
            <person name="Searle S."/>
            <person name="Zhou Y."/>
            <person name="Kokocinski F."/>
            <person name="McDonald L."/>
            <person name="Evans R."/>
            <person name="Phillips K."/>
            <person name="Atkinson A."/>
            <person name="Cooper R."/>
            <person name="Jones C."/>
            <person name="Hall R.E."/>
            <person name="Andrews T.D."/>
            <person name="Lloyd C."/>
            <person name="Ainscough R."/>
            <person name="Almeida J.P."/>
            <person name="Ambrose K.D."/>
            <person name="Anderson F."/>
            <person name="Andrew R.W."/>
            <person name="Ashwell R.I.S."/>
            <person name="Aubin K."/>
            <person name="Babbage A.K."/>
            <person name="Bagguley C.L."/>
            <person name="Bailey J."/>
            <person name="Beasley H."/>
            <person name="Bethel G."/>
            <person name="Bird C.P."/>
            <person name="Bray-Allen S."/>
            <person name="Brown J.Y."/>
            <person name="Brown A.J."/>
            <person name="Buckley D."/>
            <person name="Burton J."/>
            <person name="Bye J."/>
            <person name="Carder C."/>
            <person name="Chapman J.C."/>
            <person name="Clark S.Y."/>
            <person name="Clarke G."/>
            <person name="Clee C."/>
            <person name="Cobley V."/>
            <person name="Collier R.E."/>
            <person name="Corby N."/>
            <person name="Coville G.J."/>
            <person name="Davies J."/>
            <person name="Deadman R."/>
            <person name="Dunn M."/>
            <person name="Earthrowl M."/>
            <person name="Ellington A.G."/>
            <person name="Errington H."/>
            <person name="Frankish A."/>
            <person name="Frankland J."/>
            <person name="French L."/>
            <person name="Garner P."/>
            <person name="Garnett J."/>
            <person name="Gay L."/>
            <person name="Ghori M.R.J."/>
            <person name="Gibson R."/>
            <person name="Gilby L.M."/>
            <person name="Gillett W."/>
            <person name="Glithero R.J."/>
            <person name="Grafham D.V."/>
            <person name="Griffiths C."/>
            <person name="Griffiths-Jones S."/>
            <person name="Grocock R."/>
            <person name="Hammond S."/>
            <person name="Harrison E.S.I."/>
            <person name="Hart E."/>
            <person name="Haugen E."/>
            <person name="Heath P.D."/>
            <person name="Holmes S."/>
            <person name="Holt K."/>
            <person name="Howden P.J."/>
            <person name="Hunt A.R."/>
            <person name="Hunt S.E."/>
            <person name="Hunter G."/>
            <person name="Isherwood J."/>
            <person name="James R."/>
            <person name="Johnson C."/>
            <person name="Johnson D."/>
            <person name="Joy A."/>
            <person name="Kay M."/>
            <person name="Kershaw J.K."/>
            <person name="Kibukawa M."/>
            <person name="Kimberley A.M."/>
            <person name="King A."/>
            <person name="Knights A.J."/>
            <person name="Lad H."/>
            <person name="Laird G."/>
            <person name="Lawlor S."/>
            <person name="Leongamornlert D.A."/>
            <person name="Lloyd D.M."/>
            <person name="Loveland J."/>
            <person name="Lovell J."/>
            <person name="Lush M.J."/>
            <person name="Lyne R."/>
            <person name="Martin S."/>
            <person name="Mashreghi-Mohammadi M."/>
            <person name="Matthews L."/>
            <person name="Matthews N.S.W."/>
            <person name="McLaren S."/>
            <person name="Milne S."/>
            <person name="Mistry S."/>
            <person name="Moore M.J.F."/>
            <person name="Nickerson T."/>
            <person name="O'Dell C.N."/>
            <person name="Oliver K."/>
            <person name="Palmeiri A."/>
            <person name="Palmer S.A."/>
            <person name="Parker A."/>
            <person name="Patel D."/>
            <person name="Pearce A.V."/>
            <person name="Peck A.I."/>
            <person name="Pelan S."/>
            <person name="Phelps K."/>
            <person name="Phillimore B.J."/>
            <person name="Plumb R."/>
            <person name="Rajan J."/>
            <person name="Raymond C."/>
            <person name="Rouse G."/>
            <person name="Saenphimmachak C."/>
            <person name="Sehra H.K."/>
            <person name="Sheridan E."/>
            <person name="Shownkeen R."/>
            <person name="Sims S."/>
            <person name="Skuce C.D."/>
            <person name="Smith M."/>
            <person name="Steward C."/>
            <person name="Subramanian S."/>
            <person name="Sycamore N."/>
            <person name="Tracey A."/>
            <person name="Tromans A."/>
            <person name="Van Helmond Z."/>
            <person name="Wall M."/>
            <person name="Wallis J.M."/>
            <person name="White S."/>
            <person name="Whitehead S.L."/>
            <person name="Wilkinson J.E."/>
            <person name="Willey D.L."/>
            <person name="Williams H."/>
            <person name="Wilming L."/>
            <person name="Wray P.W."/>
            <person name="Wu Z."/>
            <person name="Coulson A."/>
            <person name="Vaudin M."/>
            <person name="Sulston J.E."/>
            <person name="Durbin R.M."/>
            <person name="Hubbard T."/>
            <person name="Wooster R."/>
            <person name="Dunham I."/>
            <person name="Carter N.P."/>
            <person name="McVean G."/>
            <person name="Ross M.T."/>
            <person name="Harrow J."/>
            <person name="Olson M.V."/>
            <person name="Beck S."/>
            <person name="Rogers J."/>
            <person name="Bentley D.R."/>
        </authorList>
    </citation>
    <scope>NUCLEOTIDE SEQUENCE [LARGE SCALE GENOMIC DNA]</scope>
</reference>
<reference key="4">
    <citation type="submission" date="2005-09" db="EMBL/GenBank/DDBJ databases">
        <authorList>
            <person name="Mural R.J."/>
            <person name="Istrail S."/>
            <person name="Sutton G.G."/>
            <person name="Florea L."/>
            <person name="Halpern A.L."/>
            <person name="Mobarry C.M."/>
            <person name="Lippert R."/>
            <person name="Walenz B."/>
            <person name="Shatkay H."/>
            <person name="Dew I."/>
            <person name="Miller J.R."/>
            <person name="Flanigan M.J."/>
            <person name="Edwards N.J."/>
            <person name="Bolanos R."/>
            <person name="Fasulo D."/>
            <person name="Halldorsson B.V."/>
            <person name="Hannenhalli S."/>
            <person name="Turner R."/>
            <person name="Yooseph S."/>
            <person name="Lu F."/>
            <person name="Nusskern D.R."/>
            <person name="Shue B.C."/>
            <person name="Zheng X.H."/>
            <person name="Zhong F."/>
            <person name="Delcher A.L."/>
            <person name="Huson D.H."/>
            <person name="Kravitz S.A."/>
            <person name="Mouchard L."/>
            <person name="Reinert K."/>
            <person name="Remington K.A."/>
            <person name="Clark A.G."/>
            <person name="Waterman M.S."/>
            <person name="Eichler E.E."/>
            <person name="Adams M.D."/>
            <person name="Hunkapiller M.W."/>
            <person name="Myers E.W."/>
            <person name="Venter J.C."/>
        </authorList>
    </citation>
    <scope>NUCLEOTIDE SEQUENCE [LARGE SCALE GENOMIC DNA]</scope>
</reference>
<reference key="5">
    <citation type="journal article" date="2004" name="Genome Res.">
        <title>The status, quality, and expansion of the NIH full-length cDNA project: the Mammalian Gene Collection (MGC).</title>
        <authorList>
            <consortium name="The MGC Project Team"/>
        </authorList>
    </citation>
    <scope>NUCLEOTIDE SEQUENCE [LARGE SCALE MRNA] (ISOFORMS 1 AND 2)</scope>
    <source>
        <tissue>Brain</tissue>
        <tissue>Colon</tissue>
    </source>
</reference>
<reference key="6">
    <citation type="journal article" date="2001" name="Biochem. J.">
        <title>A large family of endosome-localized proteins related to sorting nexin 1.</title>
        <authorList>
            <person name="Teasdale R.D."/>
            <person name="Loci D."/>
            <person name="Houghton F."/>
            <person name="Karlsson L."/>
            <person name="Gleeson P.A."/>
        </authorList>
    </citation>
    <scope>PARTIAL NUCLEOTIDE SEQUENCE [MRNA] (ISOFORM 3)</scope>
</reference>
<reference key="7">
    <citation type="journal article" date="2007" name="BMC Genomics">
        <title>The full-ORF clone resource of the German cDNA consortium.</title>
        <authorList>
            <person name="Bechtel S."/>
            <person name="Rosenfelder H."/>
            <person name="Duda A."/>
            <person name="Schmidt C.P."/>
            <person name="Ernst U."/>
            <person name="Wellenreuther R."/>
            <person name="Mehrle A."/>
            <person name="Schuster C."/>
            <person name="Bahr A."/>
            <person name="Bloecker H."/>
            <person name="Heubner D."/>
            <person name="Hoerlein A."/>
            <person name="Michel G."/>
            <person name="Wedler H."/>
            <person name="Koehrer K."/>
            <person name="Ottenwaelder B."/>
            <person name="Poustka A."/>
            <person name="Wiemann S."/>
            <person name="Schupp I."/>
        </authorList>
    </citation>
    <scope>PARTIAL NUCLEOTIDE SEQUENCE [LARGE SCALE MRNA] (ISOFORM 3)</scope>
    <source>
        <tissue>Brain</tissue>
    </source>
</reference>
<reference key="8">
    <citation type="submission" date="2004-04" db="EMBL/GenBank/DDBJ databases">
        <title>Expressed sequence tag analysis of cultured primary human ocular pericytes.</title>
        <authorList>
            <person name="Tsai J.Y."/>
            <person name="Wistow G."/>
        </authorList>
    </citation>
    <scope>NUCLEOTIDE SEQUENCE [MRNA] OF 1-132 (ISOFORM 3)</scope>
</reference>
<reference key="9">
    <citation type="journal article" date="2011" name="BMC Syst. Biol.">
        <title>Initial characterization of the human central proteome.</title>
        <authorList>
            <person name="Burkard T.R."/>
            <person name="Planyavsky M."/>
            <person name="Kaupe I."/>
            <person name="Breitwieser F.P."/>
            <person name="Buerckstuemmer T."/>
            <person name="Bennett K.L."/>
            <person name="Superti-Furga G."/>
            <person name="Colinge J."/>
        </authorList>
    </citation>
    <scope>IDENTIFICATION BY MASS SPECTROMETRY [LARGE SCALE ANALYSIS]</scope>
</reference>
<reference key="10">
    <citation type="submission" date="2009-09" db="PDB data bank">
        <title>Human sorting nexin 7, phox homology (PX) domain.</title>
        <authorList>
            <consortium name="Structural genomics consortium (SGC)"/>
        </authorList>
    </citation>
    <scope>X-RAY CRYSTALLOGRAPHY (1.7 ANGSTROMS) OF 25-154</scope>
</reference>
<reference key="11">
    <citation type="journal article" date="2020" name="J. Cell Sci.">
        <title>A heterodimeric SNX4--SNX7 SNX-BAR autophagy complex coordinates ATG9A trafficking for efficient autophagosome assembly.</title>
        <authorList>
            <person name="Anton Z."/>
            <person name="Betin V.M.S."/>
            <person name="Simonetti B."/>
            <person name="Traer C.J."/>
            <person name="Attar N."/>
            <person name="Cullen P.J."/>
            <person name="Lane J.D."/>
        </authorList>
    </citation>
    <scope>FUNCTION</scope>
    <scope>SUBCELLULAR LOCATION</scope>
    <scope>INTERACTION WITH SNX4</scope>
</reference>
<keyword id="KW-0002">3D-structure</keyword>
<keyword id="KW-0025">Alternative splicing</keyword>
<keyword id="KW-0967">Endosome</keyword>
<keyword id="KW-0446">Lipid-binding</keyword>
<keyword id="KW-0472">Membrane</keyword>
<keyword id="KW-0653">Protein transport</keyword>
<keyword id="KW-1267">Proteomics identification</keyword>
<keyword id="KW-1185">Reference proteome</keyword>
<keyword id="KW-0813">Transport</keyword>
<name>SNX7_HUMAN</name>
<sequence length="387" mass="45303">MDMNSFSPMMPTSPLSMINQIKFEDEPDLKDLFITVDEPESHVTTIETFITYRIITKTSRGEFDSSEFEVRRRYQDFLWLKGKLEEAHPTLIIPPLPEKFIVKGMVERFNDDFIETRRKALHKFLNRIADHPTLTFNEDFKIFLTAQAWELSSHKKQGPGLLSRMGQTVRAVASSMRGVKNRPEEFMEMNNFIELFSQKINLIDKISQRIYKEEREYFDEMKEYGPIHILWSASEEDLVDTLKDVASCIDRCCKATEKRMSGLSEALLPVVHEYVLYSEMLMGVMKRRDQIQAELDSKVEVLTYKKADTDLLPEEIGKLEDKVECANNALKADWERWKQNMQNDIKLAFTDMAEENIHYYEQCLATWESFLTSQTNLHLEEASEDKP</sequence>
<gene>
    <name evidence="9 11 14" type="primary">SNX7</name>
</gene>
<organism>
    <name type="scientific">Homo sapiens</name>
    <name type="common">Human</name>
    <dbReference type="NCBI Taxonomy" id="9606"/>
    <lineage>
        <taxon>Eukaryota</taxon>
        <taxon>Metazoa</taxon>
        <taxon>Chordata</taxon>
        <taxon>Craniata</taxon>
        <taxon>Vertebrata</taxon>
        <taxon>Euteleostomi</taxon>
        <taxon>Mammalia</taxon>
        <taxon>Eutheria</taxon>
        <taxon>Euarchontoglires</taxon>
        <taxon>Primates</taxon>
        <taxon>Haplorrhini</taxon>
        <taxon>Catarrhini</taxon>
        <taxon>Hominidae</taxon>
        <taxon>Homo</taxon>
    </lineage>
</organism>
<protein>
    <recommendedName>
        <fullName evidence="9 11">Sorting nexin-7</fullName>
    </recommendedName>
</protein>
<feature type="chain" id="PRO_0000213848" description="Sorting nexin-7">
    <location>
        <begin position="1"/>
        <end position="387"/>
    </location>
</feature>
<feature type="domain" description="PX" evidence="5">
    <location>
        <begin position="30"/>
        <end position="151"/>
    </location>
</feature>
<feature type="domain" description="BAR" evidence="6">
    <location>
        <begin position="178"/>
        <end position="387"/>
    </location>
</feature>
<feature type="binding site" evidence="2">
    <location>
        <position position="73"/>
    </location>
    <ligand>
        <name>a 1,2-diacyl-sn-glycero-3-phospho-(1D-myo-inositol-3-phosphate)</name>
        <dbReference type="ChEBI" id="CHEBI:58088"/>
    </ligand>
</feature>
<feature type="binding site" evidence="2">
    <location>
        <position position="75"/>
    </location>
    <ligand>
        <name>a 1,2-diacyl-sn-glycero-3-phospho-(1D-myo-inositol-3-phosphate)</name>
        <dbReference type="ChEBI" id="CHEBI:58088"/>
    </ligand>
</feature>
<feature type="binding site" evidence="4">
    <location>
        <position position="103"/>
    </location>
    <ligand>
        <name>a 1,2-diacyl-sn-glycero-3-phospho-(1D-myo-inositol-3-phosphate)</name>
        <dbReference type="ChEBI" id="CHEBI:58088"/>
    </ligand>
</feature>
<feature type="binding site" evidence="3">
    <location>
        <position position="117"/>
    </location>
    <ligand>
        <name>a 1,2-diacyl-sn-glycero-3-phospho-(1D-myo-inositol-3-phosphate)</name>
        <dbReference type="ChEBI" id="CHEBI:58088"/>
    </ligand>
</feature>
<feature type="splice variant" id="VSP_039044" description="In isoform 3." evidence="12">
    <original>M</original>
    <variation>MEGERRASQAPSSGLPAGGANGESPGGGAPFPGSSGSSALLQAEVLDLDEDEDDLEVFSKDASLM</variation>
    <location>
        <position position="1"/>
    </location>
</feature>
<feature type="splice variant" id="VSP_006191" description="In isoform 2." evidence="8 10">
    <location>
        <begin position="312"/>
        <end position="362"/>
    </location>
</feature>
<feature type="sequence variant" id="VAR_057331" description="In dbSNP:rs35391040.">
    <original>F</original>
    <variation>L</variation>
    <location>
        <position position="186"/>
    </location>
</feature>
<feature type="sequence variant" id="VAR_057332" description="In dbSNP:rs12033678.">
    <original>S</original>
    <variation>N</variation>
    <location>
        <position position="278"/>
    </location>
</feature>
<feature type="sequence conflict" description="In Ref. 2; BAD96949." evidence="13" ref="2">
    <original>S</original>
    <variation>T</variation>
    <location>
        <position position="59"/>
    </location>
</feature>
<feature type="sequence conflict" description="In Ref. 7; CAB43229." evidence="13" ref="7">
    <original>M</original>
    <variation>I</variation>
    <location>
        <position position="105"/>
    </location>
</feature>
<feature type="sequence conflict" description="In Ref. 8; CN483413." evidence="13" ref="8">
    <original>RF</original>
    <variation>PG</variation>
    <location>
        <begin position="108"/>
        <end position="109"/>
    </location>
</feature>
<feature type="sequence conflict" description="In Ref. 5; AAH10349." evidence="13" ref="5">
    <original>S</original>
    <variation>P</variation>
    <location>
        <position position="153"/>
    </location>
</feature>
<feature type="sequence conflict" description="In Ref. 7; CAB43229." evidence="13" ref="7">
    <original>M</original>
    <variation>T</variation>
    <location>
        <position position="165"/>
    </location>
</feature>
<feature type="sequence conflict" description="In Ref. 2; BAD96949." evidence="13" ref="2">
    <original>K</original>
    <variation>R</variation>
    <location>
        <position position="199"/>
    </location>
</feature>
<feature type="sequence conflict" description="In Ref. 7; CAB43229." evidence="13" ref="7">
    <original>E</original>
    <variation>G</variation>
    <location>
        <position position="324"/>
    </location>
</feature>
<feature type="sequence conflict" description="In Ref. 7; CAB43229." evidence="13" ref="7">
    <original>F</original>
    <variation>L</variation>
    <location>
        <position position="370"/>
    </location>
</feature>
<feature type="strand" evidence="15">
    <location>
        <begin position="33"/>
        <end position="43"/>
    </location>
</feature>
<feature type="strand" evidence="15">
    <location>
        <begin position="48"/>
        <end position="58"/>
    </location>
</feature>
<feature type="strand" evidence="15">
    <location>
        <begin position="60"/>
        <end position="64"/>
    </location>
</feature>
<feature type="strand" evidence="15">
    <location>
        <begin position="67"/>
        <end position="73"/>
    </location>
</feature>
<feature type="helix" evidence="15">
    <location>
        <begin position="74"/>
        <end position="87"/>
    </location>
</feature>
<feature type="helix" evidence="15">
    <location>
        <begin position="107"/>
        <end position="109"/>
    </location>
</feature>
<feature type="helix" evidence="15">
    <location>
        <begin position="111"/>
        <end position="130"/>
    </location>
</feature>
<feature type="helix" evidence="15">
    <location>
        <begin position="134"/>
        <end position="136"/>
    </location>
</feature>
<feature type="helix" evidence="15">
    <location>
        <begin position="138"/>
        <end position="145"/>
    </location>
</feature>
<accession>Q9UNH6</accession>
<accession>A8KAF3</accession>
<accession>D3DT50</accession>
<accession>Q53FQ3</accession>
<accession>Q5VT09</accession>
<accession>Q5VT10</accession>
<accession>Q86U82</accession>
<accession>Q8WVD4</accession>
<accession>Q96FW9</accession>
<accession>Q9Y3Z7</accession>
<dbReference type="EMBL" id="BT006747">
    <property type="protein sequence ID" value="AAP35393.1"/>
    <property type="molecule type" value="mRNA"/>
</dbReference>
<dbReference type="EMBL" id="AK223229">
    <property type="protein sequence ID" value="BAD96949.1"/>
    <property type="status" value="ALT_INIT"/>
    <property type="molecule type" value="mRNA"/>
</dbReference>
<dbReference type="EMBL" id="AK293018">
    <property type="protein sequence ID" value="BAF85707.1"/>
    <property type="molecule type" value="mRNA"/>
</dbReference>
<dbReference type="EMBL" id="AL627442">
    <property type="status" value="NOT_ANNOTATED_CDS"/>
    <property type="molecule type" value="Genomic_DNA"/>
</dbReference>
<dbReference type="EMBL" id="CH471097">
    <property type="protein sequence ID" value="EAW72995.1"/>
    <property type="molecule type" value="Genomic_DNA"/>
</dbReference>
<dbReference type="EMBL" id="CH471097">
    <property type="protein sequence ID" value="EAW72996.1"/>
    <property type="molecule type" value="Genomic_DNA"/>
</dbReference>
<dbReference type="EMBL" id="CH471097">
    <property type="protein sequence ID" value="EAW72997.1"/>
    <property type="molecule type" value="Genomic_DNA"/>
</dbReference>
<dbReference type="EMBL" id="CH471097">
    <property type="protein sequence ID" value="EAW72998.1"/>
    <property type="molecule type" value="Genomic_DNA"/>
</dbReference>
<dbReference type="EMBL" id="BC010349">
    <property type="protein sequence ID" value="AAH10349.1"/>
    <property type="molecule type" value="mRNA"/>
</dbReference>
<dbReference type="EMBL" id="BC018105">
    <property type="protein sequence ID" value="AAH18105.1"/>
    <property type="molecule type" value="mRNA"/>
</dbReference>
<dbReference type="EMBL" id="AF121857">
    <property type="protein sequence ID" value="AAD27830.1"/>
    <property type="status" value="ALT_INIT"/>
    <property type="molecule type" value="mRNA"/>
</dbReference>
<dbReference type="EMBL" id="AL049989">
    <property type="protein sequence ID" value="CAB43229.1"/>
    <property type="molecule type" value="mRNA"/>
</dbReference>
<dbReference type="EMBL" id="CN483413">
    <property type="status" value="NOT_ANNOTATED_CDS"/>
    <property type="molecule type" value="mRNA"/>
</dbReference>
<dbReference type="CCDS" id="CCDS755.2">
    <molecule id="Q9UNH6-3"/>
</dbReference>
<dbReference type="RefSeq" id="NP_001351832.1">
    <molecule id="Q9UNH6-1"/>
    <property type="nucleotide sequence ID" value="NM_001364903.1"/>
</dbReference>
<dbReference type="RefSeq" id="NP_057060.2">
    <molecule id="Q9UNH6-3"/>
    <property type="nucleotide sequence ID" value="NM_015976.5"/>
</dbReference>
<dbReference type="RefSeq" id="NP_689424.2">
    <property type="nucleotide sequence ID" value="NM_152238.3"/>
</dbReference>
<dbReference type="RefSeq" id="XP_006710741.1">
    <property type="nucleotide sequence ID" value="XM_006710678.2"/>
</dbReference>
<dbReference type="RefSeq" id="XP_011539866.1">
    <molecule id="Q9UNH6-1"/>
    <property type="nucleotide sequence ID" value="XM_011541564.4"/>
</dbReference>
<dbReference type="RefSeq" id="XP_016856914.1">
    <molecule id="Q9UNH6-1"/>
    <property type="nucleotide sequence ID" value="XM_017001425.3"/>
</dbReference>
<dbReference type="RefSeq" id="XP_016856915.1">
    <property type="nucleotide sequence ID" value="XM_017001426.1"/>
</dbReference>
<dbReference type="RefSeq" id="XP_016856916.1">
    <property type="nucleotide sequence ID" value="XM_017001427.1"/>
</dbReference>
<dbReference type="RefSeq" id="XP_016856917.1">
    <molecule id="Q9UNH6-2"/>
    <property type="nucleotide sequence ID" value="XM_017001428.2"/>
</dbReference>
<dbReference type="RefSeq" id="XP_047278204.1">
    <molecule id="Q9UNH6-1"/>
    <property type="nucleotide sequence ID" value="XM_047422248.1"/>
</dbReference>
<dbReference type="RefSeq" id="XP_054192909.1">
    <molecule id="Q9UNH6-1"/>
    <property type="nucleotide sequence ID" value="XM_054336934.1"/>
</dbReference>
<dbReference type="RefSeq" id="XP_054192910.1">
    <molecule id="Q9UNH6-1"/>
    <property type="nucleotide sequence ID" value="XM_054336935.1"/>
</dbReference>
<dbReference type="RefSeq" id="XP_054192911.1">
    <molecule id="Q9UNH6-2"/>
    <property type="nucleotide sequence ID" value="XM_054336936.1"/>
</dbReference>
<dbReference type="RefSeq" id="XP_054192912.1">
    <molecule id="Q9UNH6-1"/>
    <property type="nucleotide sequence ID" value="XM_054336937.1"/>
</dbReference>
<dbReference type="PDB" id="3IQ2">
    <property type="method" value="X-ray"/>
    <property type="resolution" value="1.70 A"/>
    <property type="chains" value="A/B=25-154"/>
</dbReference>
<dbReference type="PDBsum" id="3IQ2"/>
<dbReference type="SMR" id="Q9UNH6"/>
<dbReference type="BioGRID" id="119508">
    <property type="interactions" value="23"/>
</dbReference>
<dbReference type="FunCoup" id="Q9UNH6">
    <property type="interactions" value="230"/>
</dbReference>
<dbReference type="IntAct" id="Q9UNH6">
    <property type="interactions" value="23"/>
</dbReference>
<dbReference type="MINT" id="Q9UNH6"/>
<dbReference type="STRING" id="9606.ENSP00000304429"/>
<dbReference type="TCDB" id="3.A.34.1.1">
    <property type="family name" value="the sorting nexins of the escrt complexes (sn-escrt)"/>
</dbReference>
<dbReference type="iPTMnet" id="Q9UNH6"/>
<dbReference type="PhosphoSitePlus" id="Q9UNH6"/>
<dbReference type="BioMuta" id="SNX7"/>
<dbReference type="DMDM" id="12643904"/>
<dbReference type="jPOST" id="Q9UNH6"/>
<dbReference type="MassIVE" id="Q9UNH6"/>
<dbReference type="PaxDb" id="9606-ENSP00000304429"/>
<dbReference type="PeptideAtlas" id="Q9UNH6"/>
<dbReference type="ProteomicsDB" id="85293">
    <molecule id="Q9UNH6-1"/>
</dbReference>
<dbReference type="ProteomicsDB" id="85294">
    <molecule id="Q9UNH6-2"/>
</dbReference>
<dbReference type="ProteomicsDB" id="85295">
    <molecule id="Q9UNH6-3"/>
</dbReference>
<dbReference type="Pumba" id="Q9UNH6"/>
<dbReference type="Antibodypedia" id="33676">
    <property type="antibodies" value="174 antibodies from 24 providers"/>
</dbReference>
<dbReference type="DNASU" id="51375"/>
<dbReference type="Ensembl" id="ENST00000306121.8">
    <molecule id="Q9UNH6-3"/>
    <property type="protein sequence ID" value="ENSP00000304429.3"/>
    <property type="gene ID" value="ENSG00000162627.17"/>
</dbReference>
<dbReference type="GeneID" id="51375"/>
<dbReference type="KEGG" id="hsa:51375"/>
<dbReference type="MANE-Select" id="ENST00000306121.8">
    <molecule id="Q9UNH6-3"/>
    <property type="protein sequence ID" value="ENSP00000304429.3"/>
    <property type="RefSeq nucleotide sequence ID" value="NM_015976.5"/>
    <property type="RefSeq protein sequence ID" value="NP_057060.2"/>
</dbReference>
<dbReference type="UCSC" id="uc010ouc.3">
    <molecule id="Q9UNH6-1"/>
    <property type="organism name" value="human"/>
</dbReference>
<dbReference type="AGR" id="HGNC:14971"/>
<dbReference type="CTD" id="51375"/>
<dbReference type="DisGeNET" id="51375"/>
<dbReference type="GeneCards" id="SNX7"/>
<dbReference type="HGNC" id="HGNC:14971">
    <property type="gene designation" value="SNX7"/>
</dbReference>
<dbReference type="HPA" id="ENSG00000162627">
    <property type="expression patterns" value="Low tissue specificity"/>
</dbReference>
<dbReference type="MIM" id="614904">
    <property type="type" value="gene"/>
</dbReference>
<dbReference type="neXtProt" id="NX_Q9UNH6"/>
<dbReference type="OpenTargets" id="ENSG00000162627"/>
<dbReference type="PharmGKB" id="PA37947"/>
<dbReference type="VEuPathDB" id="HostDB:ENSG00000162627"/>
<dbReference type="eggNOG" id="KOG2273">
    <property type="taxonomic scope" value="Eukaryota"/>
</dbReference>
<dbReference type="GeneTree" id="ENSGT00940000155315"/>
<dbReference type="HOGENOM" id="CLU_040655_0_0_1"/>
<dbReference type="InParanoid" id="Q9UNH6"/>
<dbReference type="OMA" id="LHYYEEC"/>
<dbReference type="OrthoDB" id="205639at2759"/>
<dbReference type="PAN-GO" id="Q9UNH6">
    <property type="GO annotations" value="7 GO annotations based on evolutionary models"/>
</dbReference>
<dbReference type="PhylomeDB" id="Q9UNH6"/>
<dbReference type="TreeFam" id="TF328543"/>
<dbReference type="PathwayCommons" id="Q9UNH6"/>
<dbReference type="SignaLink" id="Q9UNH6"/>
<dbReference type="BioGRID-ORCS" id="51375">
    <property type="hits" value="11 hits in 1104 CRISPR screens"/>
</dbReference>
<dbReference type="ChiTaRS" id="SNX7">
    <property type="organism name" value="human"/>
</dbReference>
<dbReference type="EvolutionaryTrace" id="Q9UNH6"/>
<dbReference type="GenomeRNAi" id="51375"/>
<dbReference type="Pharos" id="Q9UNH6">
    <property type="development level" value="Tbio"/>
</dbReference>
<dbReference type="PRO" id="PR:Q9UNH6"/>
<dbReference type="Proteomes" id="UP000005640">
    <property type="component" value="Chromosome 1"/>
</dbReference>
<dbReference type="RNAct" id="Q9UNH6">
    <property type="molecule type" value="protein"/>
</dbReference>
<dbReference type="Bgee" id="ENSG00000162627">
    <property type="expression patterns" value="Expressed in tibia and 201 other cell types or tissues"/>
</dbReference>
<dbReference type="ExpressionAtlas" id="Q9UNH6">
    <property type="expression patterns" value="baseline and differential"/>
</dbReference>
<dbReference type="GO" id="GO:0005769">
    <property type="term" value="C:early endosome"/>
    <property type="evidence" value="ECO:0000314"/>
    <property type="project" value="UniProtKB"/>
</dbReference>
<dbReference type="GO" id="GO:0031901">
    <property type="term" value="C:early endosome membrane"/>
    <property type="evidence" value="ECO:0007669"/>
    <property type="project" value="UniProtKB-SubCell"/>
</dbReference>
<dbReference type="GO" id="GO:0000407">
    <property type="term" value="C:phagophore assembly site"/>
    <property type="evidence" value="ECO:0000318"/>
    <property type="project" value="GO_Central"/>
</dbReference>
<dbReference type="GO" id="GO:0035091">
    <property type="term" value="F:phosphatidylinositol binding"/>
    <property type="evidence" value="ECO:0007669"/>
    <property type="project" value="InterPro"/>
</dbReference>
<dbReference type="GO" id="GO:0032456">
    <property type="term" value="P:endocytic recycling"/>
    <property type="evidence" value="ECO:0000318"/>
    <property type="project" value="GO_Central"/>
</dbReference>
<dbReference type="GO" id="GO:0000423">
    <property type="term" value="P:mitophagy"/>
    <property type="evidence" value="ECO:0000318"/>
    <property type="project" value="GO_Central"/>
</dbReference>
<dbReference type="GO" id="GO:0034727">
    <property type="term" value="P:piecemeal microautophagy of the nucleus"/>
    <property type="evidence" value="ECO:0000318"/>
    <property type="project" value="GO_Central"/>
</dbReference>
<dbReference type="GO" id="GO:2000786">
    <property type="term" value="P:positive regulation of autophagosome assembly"/>
    <property type="evidence" value="ECO:0000315"/>
    <property type="project" value="UniProtKB"/>
</dbReference>
<dbReference type="GO" id="GO:0015031">
    <property type="term" value="P:protein transport"/>
    <property type="evidence" value="ECO:0000315"/>
    <property type="project" value="UniProtKB"/>
</dbReference>
<dbReference type="GO" id="GO:0061709">
    <property type="term" value="P:reticulophagy"/>
    <property type="evidence" value="ECO:0000318"/>
    <property type="project" value="GO_Central"/>
</dbReference>
<dbReference type="CDD" id="cd07666">
    <property type="entry name" value="BAR_SNX7"/>
    <property type="match status" value="1"/>
</dbReference>
<dbReference type="CDD" id="cd07284">
    <property type="entry name" value="PX_SNX7"/>
    <property type="match status" value="1"/>
</dbReference>
<dbReference type="Gene3D" id="1.20.1270.60">
    <property type="entry name" value="Arfaptin homology (AH) domain/BAR domain"/>
    <property type="match status" value="1"/>
</dbReference>
<dbReference type="Gene3D" id="3.30.1520.10">
    <property type="entry name" value="Phox-like domain"/>
    <property type="match status" value="1"/>
</dbReference>
<dbReference type="InterPro" id="IPR027267">
    <property type="entry name" value="AH/BAR_dom_sf"/>
</dbReference>
<dbReference type="InterPro" id="IPR042131">
    <property type="entry name" value="BAR_SNX7"/>
</dbReference>
<dbReference type="InterPro" id="IPR001683">
    <property type="entry name" value="PX_dom"/>
</dbReference>
<dbReference type="InterPro" id="IPR036871">
    <property type="entry name" value="PX_dom_sf"/>
</dbReference>
<dbReference type="InterPro" id="IPR042130">
    <property type="entry name" value="PX_SNX7"/>
</dbReference>
<dbReference type="PANTHER" id="PTHR45949">
    <property type="entry name" value="SORTING NEXIN-4"/>
    <property type="match status" value="1"/>
</dbReference>
<dbReference type="PANTHER" id="PTHR45949:SF3">
    <property type="entry name" value="SORTING NEXIN-7"/>
    <property type="match status" value="1"/>
</dbReference>
<dbReference type="Pfam" id="PF00787">
    <property type="entry name" value="PX"/>
    <property type="match status" value="1"/>
</dbReference>
<dbReference type="SMART" id="SM00312">
    <property type="entry name" value="PX"/>
    <property type="match status" value="1"/>
</dbReference>
<dbReference type="SUPFAM" id="SSF64268">
    <property type="entry name" value="PX domain"/>
    <property type="match status" value="1"/>
</dbReference>
<dbReference type="PROSITE" id="PS50195">
    <property type="entry name" value="PX"/>
    <property type="match status" value="1"/>
</dbReference>
<evidence type="ECO:0000250" key="1">
    <source>
        <dbReference type="UniProtKB" id="O95219"/>
    </source>
</evidence>
<evidence type="ECO:0000250" key="2">
    <source>
        <dbReference type="UniProtKB" id="Q3UR97"/>
    </source>
</evidence>
<evidence type="ECO:0000250" key="3">
    <source>
        <dbReference type="UniProtKB" id="Q6P4T1"/>
    </source>
</evidence>
<evidence type="ECO:0000250" key="4">
    <source>
        <dbReference type="UniProtKB" id="Q96L94"/>
    </source>
</evidence>
<evidence type="ECO:0000255" key="5">
    <source>
        <dbReference type="PROSITE-ProRule" id="PRU00147"/>
    </source>
</evidence>
<evidence type="ECO:0000255" key="6">
    <source>
        <dbReference type="PROSITE-ProRule" id="PRU00361"/>
    </source>
</evidence>
<evidence type="ECO:0000269" key="7">
    <source>
    </source>
</evidence>
<evidence type="ECO:0000303" key="8">
    <source>
    </source>
</evidence>
<evidence type="ECO:0000303" key="9">
    <source>
    </source>
</evidence>
<evidence type="ECO:0000303" key="10">
    <source ref="1"/>
</evidence>
<evidence type="ECO:0000303" key="11">
    <source ref="10"/>
</evidence>
<evidence type="ECO:0000303" key="12">
    <source ref="8"/>
</evidence>
<evidence type="ECO:0000305" key="13"/>
<evidence type="ECO:0000312" key="14">
    <source>
        <dbReference type="HGNC" id="HGNC:14971"/>
    </source>
</evidence>
<evidence type="ECO:0007829" key="15">
    <source>
        <dbReference type="PDB" id="3IQ2"/>
    </source>
</evidence>
<proteinExistence type="evidence at protein level"/>
<comment type="function">
    <text evidence="7">Involved in the regulation of endocytosis and in several stages of intracellular trafficking (PubMed:32513819). Together with SNX4, involved in autophagosome assembly by regulating trafficking and recycling of phospholipid scramblase ATG9A (PubMed:32513819).</text>
</comment>
<comment type="subunit">
    <text evidence="7">Heterodimer; heterodimerizes with SNX4.</text>
</comment>
<comment type="interaction">
    <interactant intactId="EBI-751422">
        <id>Q9UNH6</id>
    </interactant>
    <interactant intactId="EBI-740220">
        <id>O14964</id>
        <label>HGS</label>
    </interactant>
    <organismsDiffer>false</organismsDiffer>
    <experiments>3</experiments>
</comment>
<comment type="interaction">
    <interactant intactId="EBI-751422">
        <id>Q9UNH6</id>
    </interactant>
    <interactant intactId="EBI-724909">
        <id>O95219</id>
        <label>SNX4</label>
    </interactant>
    <organismsDiffer>false</organismsDiffer>
    <experiments>6</experiments>
</comment>
<comment type="interaction">
    <interactant intactId="EBI-751422">
        <id>Q9UNH6</id>
    </interactant>
    <interactant intactId="EBI-742397">
        <id>Q8IYF3</id>
        <label>TEX11</label>
    </interactant>
    <organismsDiffer>false</organismsDiffer>
    <experiments>4</experiments>
</comment>
<comment type="interaction">
    <interactant intactId="EBI-12424584">
        <id>Q9UNH6-3</id>
    </interactant>
    <interactant intactId="EBI-11096309">
        <id>Q9NYB9-2</id>
        <label>ABI2</label>
    </interactant>
    <organismsDiffer>false</organismsDiffer>
    <experiments>3</experiments>
</comment>
<comment type="interaction">
    <interactant intactId="EBI-12424584">
        <id>Q9UNH6-3</id>
    </interactant>
    <interactant intactId="EBI-724909">
        <id>O95219</id>
        <label>SNX4</label>
    </interactant>
    <organismsDiffer>false</organismsDiffer>
    <experiments>4</experiments>
</comment>
<comment type="interaction">
    <interactant intactId="EBI-12424584">
        <id>Q9UNH6-3</id>
    </interactant>
    <interactant intactId="EBI-12018146">
        <id>Q8IYX1</id>
        <label>TBC1D21</label>
    </interactant>
    <organismsDiffer>false</organismsDiffer>
    <experiments>3</experiments>
</comment>
<comment type="subcellular location">
    <subcellularLocation>
        <location evidence="7">Early endosome membrane</location>
        <topology evidence="1">Peripheral membrane protein</topology>
        <orientation evidence="1">Cytoplasmic side</orientation>
    </subcellularLocation>
</comment>
<comment type="alternative products">
    <event type="alternative splicing"/>
    <isoform>
        <id>Q9UNH6-1</id>
        <name>1</name>
        <sequence type="displayed"/>
    </isoform>
    <isoform>
        <id>Q9UNH6-2</id>
        <name>2</name>
        <sequence type="described" ref="VSP_006191"/>
    </isoform>
    <isoform>
        <id>Q9UNH6-3</id>
        <name>3</name>
        <sequence type="described" ref="VSP_039044"/>
    </isoform>
</comment>
<comment type="similarity">
    <text evidence="13">Belongs to the sorting nexin family.</text>
</comment>
<comment type="sequence caution" evidence="13">
    <conflict type="erroneous initiation">
        <sequence resource="EMBL-CDS" id="AAD27830"/>
    </conflict>
    <text>Truncated N-terminus.</text>
</comment>
<comment type="sequence caution" evidence="13">
    <conflict type="erroneous initiation">
        <sequence resource="EMBL-CDS" id="BAD96949"/>
    </conflict>
    <text>Truncated N-terminus.</text>
</comment>